<evidence type="ECO:0000255" key="1">
    <source>
        <dbReference type="HAMAP-Rule" id="MF_00632"/>
    </source>
</evidence>
<sequence>MSDPSFDVVSEISRPELTNAVTQALGEIKNRFDFKGSKSDIQLEDEQLVLVSDNEAKLESVIDVLVSKMAKRGLGLKNFDFKSKVEPATGGTVRMKVKIRKGMEKEQTKEVTRIIKESKLKVNVTIMGESVRVTGKKKDDLQEVIHLLKNADFPFDVQFTNYK</sequence>
<name>Y717_LEPBL</name>
<reference key="1">
    <citation type="journal article" date="2006" name="Proc. Natl. Acad. Sci. U.S.A.">
        <title>Genome reduction in Leptospira borgpetersenii reflects limited transmission potential.</title>
        <authorList>
            <person name="Bulach D.M."/>
            <person name="Zuerner R.L."/>
            <person name="Wilson P."/>
            <person name="Seemann T."/>
            <person name="McGrath A."/>
            <person name="Cullen P.A."/>
            <person name="Davis J."/>
            <person name="Johnson M."/>
            <person name="Kuczek E."/>
            <person name="Alt D.P."/>
            <person name="Peterson-Burch B."/>
            <person name="Coppel R.L."/>
            <person name="Rood J.I."/>
            <person name="Davies J.K."/>
            <person name="Adler B."/>
        </authorList>
    </citation>
    <scope>NUCLEOTIDE SEQUENCE [LARGE SCALE GENOMIC DNA]</scope>
    <source>
        <strain>L550</strain>
    </source>
</reference>
<organism>
    <name type="scientific">Leptospira borgpetersenii serovar Hardjo-bovis (strain L550)</name>
    <dbReference type="NCBI Taxonomy" id="355276"/>
    <lineage>
        <taxon>Bacteria</taxon>
        <taxon>Pseudomonadati</taxon>
        <taxon>Spirochaetota</taxon>
        <taxon>Spirochaetia</taxon>
        <taxon>Leptospirales</taxon>
        <taxon>Leptospiraceae</taxon>
        <taxon>Leptospira</taxon>
    </lineage>
</organism>
<accession>Q054G5</accession>
<gene>
    <name type="ordered locus">LBL_0717</name>
</gene>
<dbReference type="EMBL" id="CP000348">
    <property type="protein sequence ID" value="ABJ78280.1"/>
    <property type="molecule type" value="Genomic_DNA"/>
</dbReference>
<dbReference type="RefSeq" id="WP_002722105.1">
    <property type="nucleotide sequence ID" value="NC_008508.1"/>
</dbReference>
<dbReference type="SMR" id="Q054G5"/>
<dbReference type="KEGG" id="lbl:LBL_0717"/>
<dbReference type="HOGENOM" id="CLU_099839_1_0_12"/>
<dbReference type="GO" id="GO:0005829">
    <property type="term" value="C:cytosol"/>
    <property type="evidence" value="ECO:0007669"/>
    <property type="project" value="TreeGrafter"/>
</dbReference>
<dbReference type="GO" id="GO:0000166">
    <property type="term" value="F:nucleotide binding"/>
    <property type="evidence" value="ECO:0007669"/>
    <property type="project" value="TreeGrafter"/>
</dbReference>
<dbReference type="CDD" id="cd11740">
    <property type="entry name" value="YajQ_like"/>
    <property type="match status" value="1"/>
</dbReference>
<dbReference type="FunFam" id="3.30.70.990:FF:000002">
    <property type="entry name" value="UPF0234 protein LEP1GSC067_4943"/>
    <property type="match status" value="1"/>
</dbReference>
<dbReference type="Gene3D" id="3.30.70.860">
    <property type="match status" value="1"/>
</dbReference>
<dbReference type="Gene3D" id="3.30.70.990">
    <property type="entry name" value="YajQ-like, domain 2"/>
    <property type="match status" value="1"/>
</dbReference>
<dbReference type="HAMAP" id="MF_00632">
    <property type="entry name" value="YajQ"/>
    <property type="match status" value="1"/>
</dbReference>
<dbReference type="InterPro" id="IPR007551">
    <property type="entry name" value="DUF520"/>
</dbReference>
<dbReference type="InterPro" id="IPR035571">
    <property type="entry name" value="UPF0234-like_C"/>
</dbReference>
<dbReference type="InterPro" id="IPR035570">
    <property type="entry name" value="UPF0234_N"/>
</dbReference>
<dbReference type="InterPro" id="IPR036183">
    <property type="entry name" value="YajQ-like_sf"/>
</dbReference>
<dbReference type="NCBIfam" id="NF003819">
    <property type="entry name" value="PRK05412.1"/>
    <property type="match status" value="1"/>
</dbReference>
<dbReference type="PANTHER" id="PTHR30476">
    <property type="entry name" value="UPF0234 PROTEIN YAJQ"/>
    <property type="match status" value="1"/>
</dbReference>
<dbReference type="PANTHER" id="PTHR30476:SF0">
    <property type="entry name" value="UPF0234 PROTEIN YAJQ"/>
    <property type="match status" value="1"/>
</dbReference>
<dbReference type="Pfam" id="PF04461">
    <property type="entry name" value="DUF520"/>
    <property type="match status" value="1"/>
</dbReference>
<dbReference type="SUPFAM" id="SSF89963">
    <property type="entry name" value="YajQ-like"/>
    <property type="match status" value="2"/>
</dbReference>
<proteinExistence type="inferred from homology"/>
<comment type="function">
    <text evidence="1">Nucleotide-binding protein.</text>
</comment>
<comment type="similarity">
    <text evidence="1">Belongs to the YajQ family.</text>
</comment>
<feature type="chain" id="PRO_1000051736" description="Nucleotide-binding protein LBL_0717">
    <location>
        <begin position="1"/>
        <end position="163"/>
    </location>
</feature>
<protein>
    <recommendedName>
        <fullName evidence="1">Nucleotide-binding protein LBL_0717</fullName>
    </recommendedName>
</protein>
<keyword id="KW-0547">Nucleotide-binding</keyword>